<name>ATP6_PSECP</name>
<organism>
    <name type="scientific">Pseudarthrobacter chlorophenolicus (strain ATCC 700700 / DSM 12829 / CIP 107037 / JCM 12360 / KCTC 9906 / NCIMB 13794 / A6)</name>
    <name type="common">Arthrobacter chlorophenolicus</name>
    <dbReference type="NCBI Taxonomy" id="452863"/>
    <lineage>
        <taxon>Bacteria</taxon>
        <taxon>Bacillati</taxon>
        <taxon>Actinomycetota</taxon>
        <taxon>Actinomycetes</taxon>
        <taxon>Micrococcales</taxon>
        <taxon>Micrococcaceae</taxon>
        <taxon>Pseudarthrobacter</taxon>
    </lineage>
</organism>
<accession>B8HAZ5</accession>
<dbReference type="EMBL" id="CP001341">
    <property type="protein sequence ID" value="ACL40309.1"/>
    <property type="molecule type" value="Genomic_DNA"/>
</dbReference>
<dbReference type="RefSeq" id="WP_015937521.1">
    <property type="nucleotide sequence ID" value="NC_011886.1"/>
</dbReference>
<dbReference type="SMR" id="B8HAZ5"/>
<dbReference type="STRING" id="452863.Achl_2344"/>
<dbReference type="KEGG" id="ach:Achl_2344"/>
<dbReference type="eggNOG" id="COG0356">
    <property type="taxonomic scope" value="Bacteria"/>
</dbReference>
<dbReference type="HOGENOM" id="CLU_041018_0_1_11"/>
<dbReference type="OrthoDB" id="9809130at2"/>
<dbReference type="Proteomes" id="UP000002505">
    <property type="component" value="Chromosome"/>
</dbReference>
<dbReference type="GO" id="GO:0005886">
    <property type="term" value="C:plasma membrane"/>
    <property type="evidence" value="ECO:0007669"/>
    <property type="project" value="UniProtKB-SubCell"/>
</dbReference>
<dbReference type="GO" id="GO:0045259">
    <property type="term" value="C:proton-transporting ATP synthase complex"/>
    <property type="evidence" value="ECO:0007669"/>
    <property type="project" value="UniProtKB-KW"/>
</dbReference>
<dbReference type="GO" id="GO:0046933">
    <property type="term" value="F:proton-transporting ATP synthase activity, rotational mechanism"/>
    <property type="evidence" value="ECO:0007669"/>
    <property type="project" value="UniProtKB-UniRule"/>
</dbReference>
<dbReference type="CDD" id="cd00310">
    <property type="entry name" value="ATP-synt_Fo_a_6"/>
    <property type="match status" value="1"/>
</dbReference>
<dbReference type="Gene3D" id="1.20.120.220">
    <property type="entry name" value="ATP synthase, F0 complex, subunit A"/>
    <property type="match status" value="1"/>
</dbReference>
<dbReference type="HAMAP" id="MF_01393">
    <property type="entry name" value="ATP_synth_a_bact"/>
    <property type="match status" value="1"/>
</dbReference>
<dbReference type="InterPro" id="IPR000568">
    <property type="entry name" value="ATP_synth_F0_asu"/>
</dbReference>
<dbReference type="InterPro" id="IPR045083">
    <property type="entry name" value="ATP_synth_F0_asu_bact/mt"/>
</dbReference>
<dbReference type="InterPro" id="IPR035908">
    <property type="entry name" value="F0_ATP_A_sf"/>
</dbReference>
<dbReference type="NCBIfam" id="TIGR01131">
    <property type="entry name" value="ATP_synt_6_or_A"/>
    <property type="match status" value="1"/>
</dbReference>
<dbReference type="PANTHER" id="PTHR11410">
    <property type="entry name" value="ATP SYNTHASE SUBUNIT A"/>
    <property type="match status" value="1"/>
</dbReference>
<dbReference type="PANTHER" id="PTHR11410:SF0">
    <property type="entry name" value="ATP SYNTHASE SUBUNIT A"/>
    <property type="match status" value="1"/>
</dbReference>
<dbReference type="Pfam" id="PF00119">
    <property type="entry name" value="ATP-synt_A"/>
    <property type="match status" value="1"/>
</dbReference>
<dbReference type="PRINTS" id="PR00123">
    <property type="entry name" value="ATPASEA"/>
</dbReference>
<dbReference type="SUPFAM" id="SSF81336">
    <property type="entry name" value="F1F0 ATP synthase subunit A"/>
    <property type="match status" value="1"/>
</dbReference>
<reference key="1">
    <citation type="submission" date="2009-01" db="EMBL/GenBank/DDBJ databases">
        <title>Complete sequence of chromosome of Arthrobacter chlorophenolicus A6.</title>
        <authorList>
            <consortium name="US DOE Joint Genome Institute"/>
            <person name="Lucas S."/>
            <person name="Copeland A."/>
            <person name="Lapidus A."/>
            <person name="Glavina del Rio T."/>
            <person name="Tice H."/>
            <person name="Bruce D."/>
            <person name="Goodwin L."/>
            <person name="Pitluck S."/>
            <person name="Goltsman E."/>
            <person name="Clum A."/>
            <person name="Larimer F."/>
            <person name="Land M."/>
            <person name="Hauser L."/>
            <person name="Kyrpides N."/>
            <person name="Mikhailova N."/>
            <person name="Jansson J."/>
            <person name="Richardson P."/>
        </authorList>
    </citation>
    <scope>NUCLEOTIDE SEQUENCE [LARGE SCALE GENOMIC DNA]</scope>
    <source>
        <strain>ATCC 700700 / DSM 12829 / CIP 107037 / JCM 12360 / KCTC 9906 / NCIMB 13794 / A6</strain>
    </source>
</reference>
<comment type="function">
    <text evidence="1">Key component of the proton channel; it plays a direct role in the translocation of protons across the membrane.</text>
</comment>
<comment type="subunit">
    <text evidence="1">F-type ATPases have 2 components, CF(1) - the catalytic core - and CF(0) - the membrane proton channel. CF(1) has five subunits: alpha(3), beta(3), gamma(1), delta(1), epsilon(1). CF(0) has three main subunits: a(1), b(2) and c(9-12). The alpha and beta chains form an alternating ring which encloses part of the gamma chain. CF(1) is attached to CF(0) by a central stalk formed by the gamma and epsilon chains, while a peripheral stalk is formed by the delta and b chains.</text>
</comment>
<comment type="subcellular location">
    <subcellularLocation>
        <location evidence="1">Cell membrane</location>
        <topology evidence="1">Multi-pass membrane protein</topology>
    </subcellularLocation>
</comment>
<comment type="similarity">
    <text evidence="1">Belongs to the ATPase A chain family.</text>
</comment>
<protein>
    <recommendedName>
        <fullName evidence="1">ATP synthase subunit a</fullName>
    </recommendedName>
    <alternativeName>
        <fullName evidence="1">ATP synthase F0 sector subunit a</fullName>
    </alternativeName>
    <alternativeName>
        <fullName evidence="1">F-ATPase subunit 6</fullName>
    </alternativeName>
</protein>
<keyword id="KW-0066">ATP synthesis</keyword>
<keyword id="KW-1003">Cell membrane</keyword>
<keyword id="KW-0138">CF(0)</keyword>
<keyword id="KW-0375">Hydrogen ion transport</keyword>
<keyword id="KW-0406">Ion transport</keyword>
<keyword id="KW-0472">Membrane</keyword>
<keyword id="KW-0812">Transmembrane</keyword>
<keyword id="KW-1133">Transmembrane helix</keyword>
<keyword id="KW-0813">Transport</keyword>
<evidence type="ECO:0000255" key="1">
    <source>
        <dbReference type="HAMAP-Rule" id="MF_01393"/>
    </source>
</evidence>
<gene>
    <name evidence="1" type="primary">atpB</name>
    <name type="ordered locus">Achl_2344</name>
</gene>
<proteinExistence type="inferred from homology"/>
<sequence length="266" mass="28967">MIALALPAQDSGEFTPPGINEMHLPAILPWGAAEGFSKQMLLVLLSVVFIAVFFVLAARKQQLVPGKLQFAGEAAYGFVRNGIAKDIIGGRDFIKYVPLLFSLFFFILVNNIYGAIPLIQLPTFSHVGGAYVLAGIVYFTWIAIGIKKNGLRYFKLATVPSGVPWFILPIVIPIEIISNFVVRPVTHSLRLFATMLAGHLIVMIAGSGIEYLVMQESILLKGTSVLVLAGAIAMYMLEALIMVLQAYVFTLLTAIYIEGALHADSH</sequence>
<feature type="chain" id="PRO_1000184276" description="ATP synthase subunit a">
    <location>
        <begin position="1"/>
        <end position="266"/>
    </location>
</feature>
<feature type="transmembrane region" description="Helical" evidence="1">
    <location>
        <begin position="38"/>
        <end position="58"/>
    </location>
</feature>
<feature type="transmembrane region" description="Helical" evidence="1">
    <location>
        <begin position="99"/>
        <end position="119"/>
    </location>
</feature>
<feature type="transmembrane region" description="Helical" evidence="1">
    <location>
        <begin position="126"/>
        <end position="146"/>
    </location>
</feature>
<feature type="transmembrane region" description="Helical" evidence="1">
    <location>
        <begin position="162"/>
        <end position="182"/>
    </location>
</feature>
<feature type="transmembrane region" description="Helical" evidence="1">
    <location>
        <begin position="191"/>
        <end position="211"/>
    </location>
</feature>
<feature type="transmembrane region" description="Helical" evidence="1">
    <location>
        <begin position="224"/>
        <end position="244"/>
    </location>
</feature>